<organism>
    <name type="scientific">Methanothrix thermoacetophila (strain DSM 6194 / JCM 14653 / NBRC 101360 / PT)</name>
    <name type="common">Methanosaeta thermophila</name>
    <dbReference type="NCBI Taxonomy" id="349307"/>
    <lineage>
        <taxon>Archaea</taxon>
        <taxon>Methanobacteriati</taxon>
        <taxon>Methanobacteriota</taxon>
        <taxon>Stenosarchaea group</taxon>
        <taxon>Methanomicrobia</taxon>
        <taxon>Methanotrichales</taxon>
        <taxon>Methanotrichaceae</taxon>
        <taxon>Methanothrix</taxon>
    </lineage>
</organism>
<protein>
    <recommendedName>
        <fullName evidence="1">Small ribosomal subunit protein uS3</fullName>
    </recommendedName>
    <alternativeName>
        <fullName evidence="3">30S ribosomal protein S3</fullName>
    </alternativeName>
</protein>
<proteinExistence type="inferred from homology"/>
<gene>
    <name evidence="1" type="primary">rps3</name>
    <name type="ordered locus">Mthe_1722</name>
</gene>
<name>RS3_METTP</name>
<sequence>MAVEKKFVQEGFTKALVDEYLAKELDRAGYGGMVMNRTPMGTQITVYAEKPGMVIGKGGKLIRKLTRDLERRFRLDNPQIDVQDVGKSDLNARVVANRLASSLEHGWYFRKAGQSMLRRVMDSGALGCEIVISGKLTGPRSRVEKFLAGYIKHSGKPAEEIVDTGYAVAVKKLGAIGCQVRIVPPGAVLPDDFQINAPPKEPEKEPVVEEAVLEAEPSQAAETQEQQAGEKKSELDRLLDEPVETPPTTEEGQSPQEPESRTEMSEAETHGDIQDR</sequence>
<reference key="1">
    <citation type="submission" date="2006-10" db="EMBL/GenBank/DDBJ databases">
        <title>Complete sequence of Methanosaeta thermophila PT.</title>
        <authorList>
            <consortium name="US DOE Joint Genome Institute"/>
            <person name="Copeland A."/>
            <person name="Lucas S."/>
            <person name="Lapidus A."/>
            <person name="Barry K."/>
            <person name="Detter J.C."/>
            <person name="Glavina del Rio T."/>
            <person name="Hammon N."/>
            <person name="Israni S."/>
            <person name="Pitluck S."/>
            <person name="Chain P."/>
            <person name="Malfatti S."/>
            <person name="Shin M."/>
            <person name="Vergez L."/>
            <person name="Schmutz J."/>
            <person name="Larimer F."/>
            <person name="Land M."/>
            <person name="Hauser L."/>
            <person name="Kyrpides N."/>
            <person name="Kim E."/>
            <person name="Smith K.S."/>
            <person name="Ingram-Smith C."/>
            <person name="Richardson P."/>
        </authorList>
    </citation>
    <scope>NUCLEOTIDE SEQUENCE [LARGE SCALE GENOMIC DNA]</scope>
    <source>
        <strain>DSM 6194 / JCM 14653 / NBRC 101360 / PT</strain>
    </source>
</reference>
<accession>A0B9W4</accession>
<feature type="chain" id="PRO_0000293925" description="Small ribosomal subunit protein uS3">
    <location>
        <begin position="1"/>
        <end position="276"/>
    </location>
</feature>
<feature type="domain" description="KH type-2" evidence="1">
    <location>
        <begin position="17"/>
        <end position="86"/>
    </location>
</feature>
<feature type="region of interest" description="Disordered" evidence="2">
    <location>
        <begin position="193"/>
        <end position="276"/>
    </location>
</feature>
<feature type="compositionally biased region" description="Low complexity" evidence="2">
    <location>
        <begin position="214"/>
        <end position="227"/>
    </location>
</feature>
<feature type="compositionally biased region" description="Basic and acidic residues" evidence="2">
    <location>
        <begin position="228"/>
        <end position="240"/>
    </location>
</feature>
<feature type="compositionally biased region" description="Basic and acidic residues" evidence="2">
    <location>
        <begin position="258"/>
        <end position="276"/>
    </location>
</feature>
<keyword id="KW-1185">Reference proteome</keyword>
<keyword id="KW-0687">Ribonucleoprotein</keyword>
<keyword id="KW-0689">Ribosomal protein</keyword>
<keyword id="KW-0694">RNA-binding</keyword>
<keyword id="KW-0699">rRNA-binding</keyword>
<dbReference type="EMBL" id="CP000477">
    <property type="protein sequence ID" value="ABK15488.1"/>
    <property type="molecule type" value="Genomic_DNA"/>
</dbReference>
<dbReference type="RefSeq" id="WP_011696866.1">
    <property type="nucleotide sequence ID" value="NC_008553.1"/>
</dbReference>
<dbReference type="SMR" id="A0B9W4"/>
<dbReference type="STRING" id="349307.Mthe_1722"/>
<dbReference type="GeneID" id="4462915"/>
<dbReference type="KEGG" id="mtp:Mthe_1722"/>
<dbReference type="HOGENOM" id="CLU_058591_1_1_2"/>
<dbReference type="OrthoDB" id="9126at2157"/>
<dbReference type="Proteomes" id="UP000000674">
    <property type="component" value="Chromosome"/>
</dbReference>
<dbReference type="GO" id="GO:0022627">
    <property type="term" value="C:cytosolic small ribosomal subunit"/>
    <property type="evidence" value="ECO:0007669"/>
    <property type="project" value="TreeGrafter"/>
</dbReference>
<dbReference type="GO" id="GO:0019843">
    <property type="term" value="F:rRNA binding"/>
    <property type="evidence" value="ECO:0007669"/>
    <property type="project" value="UniProtKB-UniRule"/>
</dbReference>
<dbReference type="GO" id="GO:0003735">
    <property type="term" value="F:structural constituent of ribosome"/>
    <property type="evidence" value="ECO:0007669"/>
    <property type="project" value="InterPro"/>
</dbReference>
<dbReference type="GO" id="GO:0006412">
    <property type="term" value="P:translation"/>
    <property type="evidence" value="ECO:0007669"/>
    <property type="project" value="UniProtKB-UniRule"/>
</dbReference>
<dbReference type="CDD" id="cd02411">
    <property type="entry name" value="KH-II_30S_S3_arch"/>
    <property type="match status" value="1"/>
</dbReference>
<dbReference type="FunFam" id="3.30.300.20:FF:000001">
    <property type="entry name" value="30S ribosomal protein S3"/>
    <property type="match status" value="1"/>
</dbReference>
<dbReference type="Gene3D" id="3.30.300.20">
    <property type="match status" value="1"/>
</dbReference>
<dbReference type="Gene3D" id="3.30.1140.32">
    <property type="entry name" value="Ribosomal protein S3, C-terminal domain"/>
    <property type="match status" value="1"/>
</dbReference>
<dbReference type="HAMAP" id="MF_01309_A">
    <property type="entry name" value="Ribosomal_uS3_A"/>
    <property type="match status" value="1"/>
</dbReference>
<dbReference type="InterPro" id="IPR004087">
    <property type="entry name" value="KH_dom"/>
</dbReference>
<dbReference type="InterPro" id="IPR015946">
    <property type="entry name" value="KH_dom-like_a/b"/>
</dbReference>
<dbReference type="InterPro" id="IPR004044">
    <property type="entry name" value="KH_dom_type_2"/>
</dbReference>
<dbReference type="InterPro" id="IPR009019">
    <property type="entry name" value="KH_sf_prok-type"/>
</dbReference>
<dbReference type="InterPro" id="IPR036419">
    <property type="entry name" value="Ribosomal_S3_C_sf"/>
</dbReference>
<dbReference type="InterPro" id="IPR027488">
    <property type="entry name" value="Ribosomal_uS3_arc"/>
</dbReference>
<dbReference type="InterPro" id="IPR001351">
    <property type="entry name" value="Ribosomal_uS3_C"/>
</dbReference>
<dbReference type="InterPro" id="IPR005703">
    <property type="entry name" value="Ribosomal_uS3_euk/arc"/>
</dbReference>
<dbReference type="NCBIfam" id="NF003219">
    <property type="entry name" value="PRK04191.1"/>
    <property type="match status" value="1"/>
</dbReference>
<dbReference type="NCBIfam" id="TIGR01008">
    <property type="entry name" value="uS3_euk_arch"/>
    <property type="match status" value="1"/>
</dbReference>
<dbReference type="PANTHER" id="PTHR11760">
    <property type="entry name" value="30S/40S RIBOSOMAL PROTEIN S3"/>
    <property type="match status" value="1"/>
</dbReference>
<dbReference type="PANTHER" id="PTHR11760:SF32">
    <property type="entry name" value="SMALL RIBOSOMAL SUBUNIT PROTEIN US3"/>
    <property type="match status" value="1"/>
</dbReference>
<dbReference type="Pfam" id="PF07650">
    <property type="entry name" value="KH_2"/>
    <property type="match status" value="1"/>
</dbReference>
<dbReference type="Pfam" id="PF00189">
    <property type="entry name" value="Ribosomal_S3_C"/>
    <property type="match status" value="1"/>
</dbReference>
<dbReference type="SMART" id="SM00322">
    <property type="entry name" value="KH"/>
    <property type="match status" value="1"/>
</dbReference>
<dbReference type="SUPFAM" id="SSF54814">
    <property type="entry name" value="Prokaryotic type KH domain (KH-domain type II)"/>
    <property type="match status" value="1"/>
</dbReference>
<dbReference type="SUPFAM" id="SSF54821">
    <property type="entry name" value="Ribosomal protein S3 C-terminal domain"/>
    <property type="match status" value="1"/>
</dbReference>
<dbReference type="PROSITE" id="PS50823">
    <property type="entry name" value="KH_TYPE_2"/>
    <property type="match status" value="1"/>
</dbReference>
<comment type="function">
    <text evidence="1">Binds the lower part of the 30S subunit head.</text>
</comment>
<comment type="subunit">
    <text evidence="1">Part of the 30S ribosomal subunit.</text>
</comment>
<comment type="similarity">
    <text evidence="1">Belongs to the universal ribosomal protein uS3 family.</text>
</comment>
<evidence type="ECO:0000255" key="1">
    <source>
        <dbReference type="HAMAP-Rule" id="MF_01309"/>
    </source>
</evidence>
<evidence type="ECO:0000256" key="2">
    <source>
        <dbReference type="SAM" id="MobiDB-lite"/>
    </source>
</evidence>
<evidence type="ECO:0000305" key="3"/>